<evidence type="ECO:0000255" key="1">
    <source>
        <dbReference type="PROSITE-ProRule" id="PRU00434"/>
    </source>
</evidence>
<evidence type="ECO:0000305" key="2"/>
<dbReference type="EMBL" id="L77117">
    <property type="protein sequence ID" value="AAB99520.1"/>
    <property type="molecule type" value="Genomic_DNA"/>
</dbReference>
<dbReference type="PIR" id="C64488">
    <property type="entry name" value="C64488"/>
</dbReference>
<dbReference type="RefSeq" id="WP_010871031.1">
    <property type="nucleotide sequence ID" value="NC_000909.1"/>
</dbReference>
<dbReference type="SMR" id="Q58903"/>
<dbReference type="FunCoup" id="Q58903">
    <property type="interactions" value="23"/>
</dbReference>
<dbReference type="STRING" id="243232.MJ_1508"/>
<dbReference type="PaxDb" id="243232-MJ_1508"/>
<dbReference type="EnsemblBacteria" id="AAB99520">
    <property type="protein sequence ID" value="AAB99520"/>
    <property type="gene ID" value="MJ_1508"/>
</dbReference>
<dbReference type="GeneID" id="1452415"/>
<dbReference type="KEGG" id="mja:MJ_1508"/>
<dbReference type="eggNOG" id="arCOG00922">
    <property type="taxonomic scope" value="Archaea"/>
</dbReference>
<dbReference type="HOGENOM" id="CLU_000604_1_22_2"/>
<dbReference type="InParanoid" id="Q58903"/>
<dbReference type="OrthoDB" id="31298at2157"/>
<dbReference type="PhylomeDB" id="Q58903"/>
<dbReference type="Proteomes" id="UP000000805">
    <property type="component" value="Chromosome"/>
</dbReference>
<dbReference type="GO" id="GO:0005886">
    <property type="term" value="C:plasma membrane"/>
    <property type="evidence" value="ECO:0000318"/>
    <property type="project" value="GO_Central"/>
</dbReference>
<dbReference type="GO" id="GO:0005524">
    <property type="term" value="F:ATP binding"/>
    <property type="evidence" value="ECO:0007669"/>
    <property type="project" value="UniProtKB-KW"/>
</dbReference>
<dbReference type="GO" id="GO:0016887">
    <property type="term" value="F:ATP hydrolysis activity"/>
    <property type="evidence" value="ECO:0007669"/>
    <property type="project" value="InterPro"/>
</dbReference>
<dbReference type="GO" id="GO:0022857">
    <property type="term" value="F:transmembrane transporter activity"/>
    <property type="evidence" value="ECO:0000318"/>
    <property type="project" value="GO_Central"/>
</dbReference>
<dbReference type="GO" id="GO:0055085">
    <property type="term" value="P:transmembrane transport"/>
    <property type="evidence" value="ECO:0000318"/>
    <property type="project" value="GO_Central"/>
</dbReference>
<dbReference type="CDD" id="cd03255">
    <property type="entry name" value="ABC_MJ0796_LolCDE_FtsE"/>
    <property type="match status" value="1"/>
</dbReference>
<dbReference type="FunFam" id="3.40.50.300:FF:000032">
    <property type="entry name" value="Export ABC transporter ATP-binding protein"/>
    <property type="match status" value="1"/>
</dbReference>
<dbReference type="Gene3D" id="3.40.50.300">
    <property type="entry name" value="P-loop containing nucleotide triphosphate hydrolases"/>
    <property type="match status" value="1"/>
</dbReference>
<dbReference type="InterPro" id="IPR003593">
    <property type="entry name" value="AAA+_ATPase"/>
</dbReference>
<dbReference type="InterPro" id="IPR003439">
    <property type="entry name" value="ABC_transporter-like_ATP-bd"/>
</dbReference>
<dbReference type="InterPro" id="IPR017871">
    <property type="entry name" value="ABC_transporter-like_CS"/>
</dbReference>
<dbReference type="InterPro" id="IPR015854">
    <property type="entry name" value="ABC_transpr_LolD-like"/>
</dbReference>
<dbReference type="InterPro" id="IPR017911">
    <property type="entry name" value="MacB-like_ATP-bd"/>
</dbReference>
<dbReference type="InterPro" id="IPR027417">
    <property type="entry name" value="P-loop_NTPase"/>
</dbReference>
<dbReference type="PANTHER" id="PTHR24220:SF86">
    <property type="entry name" value="ABC TRANSPORTER ABCH.1"/>
    <property type="match status" value="1"/>
</dbReference>
<dbReference type="PANTHER" id="PTHR24220">
    <property type="entry name" value="IMPORT ATP-BINDING PROTEIN"/>
    <property type="match status" value="1"/>
</dbReference>
<dbReference type="Pfam" id="PF00005">
    <property type="entry name" value="ABC_tran"/>
    <property type="match status" value="1"/>
</dbReference>
<dbReference type="SMART" id="SM00382">
    <property type="entry name" value="AAA"/>
    <property type="match status" value="1"/>
</dbReference>
<dbReference type="SUPFAM" id="SSF52540">
    <property type="entry name" value="P-loop containing nucleoside triphosphate hydrolases"/>
    <property type="match status" value="1"/>
</dbReference>
<dbReference type="PROSITE" id="PS00211">
    <property type="entry name" value="ABC_TRANSPORTER_1"/>
    <property type="match status" value="1"/>
</dbReference>
<dbReference type="PROSITE" id="PS50893">
    <property type="entry name" value="ABC_TRANSPORTER_2"/>
    <property type="match status" value="1"/>
</dbReference>
<sequence>MIEAKNVWKIYGKGEAKTIALKNINLKIEEGEFVMIMGPSGCGKSTLLNILALLDTPTKGEVYYKGRRTSSMSENERAIFRRKISGFIFQQFHLIKTLTALENVELPMMLDERDKSYRRKRAKKLLEMVGLGDRLNHYPHQLSGGQQQRVAIARALANNPKIIFADEPTGNLDSKSGMAVMSILKGLNEKGITIIMVTHEQELTKYASKIIKLRDGEIVEIINK</sequence>
<comment type="similarity">
    <text evidence="2">Belongs to the ABC transporter superfamily.</text>
</comment>
<organism>
    <name type="scientific">Methanocaldococcus jannaschii (strain ATCC 43067 / DSM 2661 / JAL-1 / JCM 10045 / NBRC 100440)</name>
    <name type="common">Methanococcus jannaschii</name>
    <dbReference type="NCBI Taxonomy" id="243232"/>
    <lineage>
        <taxon>Archaea</taxon>
        <taxon>Methanobacteriati</taxon>
        <taxon>Methanobacteriota</taxon>
        <taxon>Methanomada group</taxon>
        <taxon>Methanococci</taxon>
        <taxon>Methanococcales</taxon>
        <taxon>Methanocaldococcaceae</taxon>
        <taxon>Methanocaldococcus</taxon>
    </lineage>
</organism>
<reference key="1">
    <citation type="journal article" date="1996" name="Science">
        <title>Complete genome sequence of the methanogenic archaeon, Methanococcus jannaschii.</title>
        <authorList>
            <person name="Bult C.J."/>
            <person name="White O."/>
            <person name="Olsen G.J."/>
            <person name="Zhou L."/>
            <person name="Fleischmann R.D."/>
            <person name="Sutton G.G."/>
            <person name="Blake J.A."/>
            <person name="FitzGerald L.M."/>
            <person name="Clayton R.A."/>
            <person name="Gocayne J.D."/>
            <person name="Kerlavage A.R."/>
            <person name="Dougherty B.A."/>
            <person name="Tomb J.-F."/>
            <person name="Adams M.D."/>
            <person name="Reich C.I."/>
            <person name="Overbeek R."/>
            <person name="Kirkness E.F."/>
            <person name="Weinstock K.G."/>
            <person name="Merrick J.M."/>
            <person name="Glodek A."/>
            <person name="Scott J.L."/>
            <person name="Geoghagen N.S.M."/>
            <person name="Weidman J.F."/>
            <person name="Fuhrmann J.L."/>
            <person name="Nguyen D."/>
            <person name="Utterback T.R."/>
            <person name="Kelley J.M."/>
            <person name="Peterson J.D."/>
            <person name="Sadow P.W."/>
            <person name="Hanna M.C."/>
            <person name="Cotton M.D."/>
            <person name="Roberts K.M."/>
            <person name="Hurst M.A."/>
            <person name="Kaine B.P."/>
            <person name="Borodovsky M."/>
            <person name="Klenk H.-P."/>
            <person name="Fraser C.M."/>
            <person name="Smith H.O."/>
            <person name="Woese C.R."/>
            <person name="Venter J.C."/>
        </authorList>
    </citation>
    <scope>NUCLEOTIDE SEQUENCE [LARGE SCALE GENOMIC DNA]</scope>
    <source>
        <strain>ATCC 43067 / DSM 2661 / JAL-1 / JCM 10045 / NBRC 100440</strain>
    </source>
</reference>
<gene>
    <name type="ordered locus">MJ1508</name>
</gene>
<proteinExistence type="inferred from homology"/>
<accession>Q58903</accession>
<protein>
    <recommendedName>
        <fullName>Uncharacterized ABC transporter ATP-binding protein MJ1508</fullName>
    </recommendedName>
</protein>
<keyword id="KW-0067">ATP-binding</keyword>
<keyword id="KW-0547">Nucleotide-binding</keyword>
<keyword id="KW-1185">Reference proteome</keyword>
<keyword id="KW-0813">Transport</keyword>
<feature type="chain" id="PRO_0000093226" description="Uncharacterized ABC transporter ATP-binding protein MJ1508">
    <location>
        <begin position="1"/>
        <end position="224"/>
    </location>
</feature>
<feature type="domain" description="ABC transporter" evidence="1">
    <location>
        <begin position="2"/>
        <end position="221"/>
    </location>
</feature>
<feature type="binding site" evidence="1">
    <location>
        <begin position="38"/>
        <end position="45"/>
    </location>
    <ligand>
        <name>ATP</name>
        <dbReference type="ChEBI" id="CHEBI:30616"/>
    </ligand>
</feature>
<name>Y1508_METJA</name>